<keyword id="KW-0067">ATP-binding</keyword>
<keyword id="KW-0143">Chaperone</keyword>
<keyword id="KW-0963">Cytoplasm</keyword>
<keyword id="KW-0413">Isomerase</keyword>
<keyword id="KW-0547">Nucleotide-binding</keyword>
<keyword id="KW-1185">Reference proteome</keyword>
<accession>A4SZV4</accession>
<dbReference type="EC" id="5.6.1.7" evidence="1"/>
<dbReference type="EMBL" id="CP000655">
    <property type="protein sequence ID" value="ABP35018.1"/>
    <property type="molecule type" value="Genomic_DNA"/>
</dbReference>
<dbReference type="RefSeq" id="WP_011903641.1">
    <property type="nucleotide sequence ID" value="NC_009379.1"/>
</dbReference>
<dbReference type="SMR" id="A4SZV4"/>
<dbReference type="GeneID" id="31482194"/>
<dbReference type="KEGG" id="pnu:Pnuc_1805"/>
<dbReference type="eggNOG" id="COG0459">
    <property type="taxonomic scope" value="Bacteria"/>
</dbReference>
<dbReference type="HOGENOM" id="CLU_016503_3_0_4"/>
<dbReference type="Proteomes" id="UP000000231">
    <property type="component" value="Chromosome"/>
</dbReference>
<dbReference type="GO" id="GO:0005737">
    <property type="term" value="C:cytoplasm"/>
    <property type="evidence" value="ECO:0007669"/>
    <property type="project" value="UniProtKB-SubCell"/>
</dbReference>
<dbReference type="GO" id="GO:0005524">
    <property type="term" value="F:ATP binding"/>
    <property type="evidence" value="ECO:0007669"/>
    <property type="project" value="UniProtKB-UniRule"/>
</dbReference>
<dbReference type="GO" id="GO:0140662">
    <property type="term" value="F:ATP-dependent protein folding chaperone"/>
    <property type="evidence" value="ECO:0007669"/>
    <property type="project" value="InterPro"/>
</dbReference>
<dbReference type="GO" id="GO:0016853">
    <property type="term" value="F:isomerase activity"/>
    <property type="evidence" value="ECO:0007669"/>
    <property type="project" value="UniProtKB-KW"/>
</dbReference>
<dbReference type="GO" id="GO:0051082">
    <property type="term" value="F:unfolded protein binding"/>
    <property type="evidence" value="ECO:0007669"/>
    <property type="project" value="UniProtKB-UniRule"/>
</dbReference>
<dbReference type="GO" id="GO:0042026">
    <property type="term" value="P:protein refolding"/>
    <property type="evidence" value="ECO:0007669"/>
    <property type="project" value="UniProtKB-UniRule"/>
</dbReference>
<dbReference type="CDD" id="cd03344">
    <property type="entry name" value="GroEL"/>
    <property type="match status" value="1"/>
</dbReference>
<dbReference type="FunFam" id="3.50.7.10:FF:000001">
    <property type="entry name" value="60 kDa chaperonin"/>
    <property type="match status" value="1"/>
</dbReference>
<dbReference type="Gene3D" id="3.50.7.10">
    <property type="entry name" value="GroEL"/>
    <property type="match status" value="1"/>
</dbReference>
<dbReference type="Gene3D" id="1.10.560.10">
    <property type="entry name" value="GroEL-like equatorial domain"/>
    <property type="match status" value="1"/>
</dbReference>
<dbReference type="Gene3D" id="3.30.260.10">
    <property type="entry name" value="TCP-1-like chaperonin intermediate domain"/>
    <property type="match status" value="1"/>
</dbReference>
<dbReference type="HAMAP" id="MF_00600">
    <property type="entry name" value="CH60"/>
    <property type="match status" value="1"/>
</dbReference>
<dbReference type="InterPro" id="IPR018370">
    <property type="entry name" value="Chaperonin_Cpn60_CS"/>
</dbReference>
<dbReference type="InterPro" id="IPR001844">
    <property type="entry name" value="Cpn60/GroEL"/>
</dbReference>
<dbReference type="InterPro" id="IPR002423">
    <property type="entry name" value="Cpn60/GroEL/TCP-1"/>
</dbReference>
<dbReference type="InterPro" id="IPR027409">
    <property type="entry name" value="GroEL-like_apical_dom_sf"/>
</dbReference>
<dbReference type="InterPro" id="IPR027413">
    <property type="entry name" value="GROEL-like_equatorial_sf"/>
</dbReference>
<dbReference type="InterPro" id="IPR027410">
    <property type="entry name" value="TCP-1-like_intermed_sf"/>
</dbReference>
<dbReference type="NCBIfam" id="TIGR02348">
    <property type="entry name" value="GroEL"/>
    <property type="match status" value="1"/>
</dbReference>
<dbReference type="NCBIfam" id="NF000592">
    <property type="entry name" value="PRK00013.1"/>
    <property type="match status" value="1"/>
</dbReference>
<dbReference type="NCBIfam" id="NF009487">
    <property type="entry name" value="PRK12849.1"/>
    <property type="match status" value="1"/>
</dbReference>
<dbReference type="NCBIfam" id="NF009488">
    <property type="entry name" value="PRK12850.1"/>
    <property type="match status" value="1"/>
</dbReference>
<dbReference type="NCBIfam" id="NF009489">
    <property type="entry name" value="PRK12851.1"/>
    <property type="match status" value="1"/>
</dbReference>
<dbReference type="PANTHER" id="PTHR45633">
    <property type="entry name" value="60 KDA HEAT SHOCK PROTEIN, MITOCHONDRIAL"/>
    <property type="match status" value="1"/>
</dbReference>
<dbReference type="Pfam" id="PF00118">
    <property type="entry name" value="Cpn60_TCP1"/>
    <property type="match status" value="1"/>
</dbReference>
<dbReference type="PRINTS" id="PR00298">
    <property type="entry name" value="CHAPERONIN60"/>
</dbReference>
<dbReference type="SUPFAM" id="SSF52029">
    <property type="entry name" value="GroEL apical domain-like"/>
    <property type="match status" value="1"/>
</dbReference>
<dbReference type="SUPFAM" id="SSF48592">
    <property type="entry name" value="GroEL equatorial domain-like"/>
    <property type="match status" value="1"/>
</dbReference>
<dbReference type="SUPFAM" id="SSF54849">
    <property type="entry name" value="GroEL-intermediate domain like"/>
    <property type="match status" value="1"/>
</dbReference>
<dbReference type="PROSITE" id="PS00296">
    <property type="entry name" value="CHAPERONINS_CPN60"/>
    <property type="match status" value="1"/>
</dbReference>
<proteinExistence type="inferred from homology"/>
<feature type="chain" id="PRO_1000082482" description="Chaperonin GroEL">
    <location>
        <begin position="1"/>
        <end position="550"/>
    </location>
</feature>
<feature type="binding site" evidence="1">
    <location>
        <begin position="30"/>
        <end position="33"/>
    </location>
    <ligand>
        <name>ATP</name>
        <dbReference type="ChEBI" id="CHEBI:30616"/>
    </ligand>
</feature>
<feature type="binding site" evidence="1">
    <location>
        <position position="51"/>
    </location>
    <ligand>
        <name>ATP</name>
        <dbReference type="ChEBI" id="CHEBI:30616"/>
    </ligand>
</feature>
<feature type="binding site" evidence="1">
    <location>
        <begin position="87"/>
        <end position="91"/>
    </location>
    <ligand>
        <name>ATP</name>
        <dbReference type="ChEBI" id="CHEBI:30616"/>
    </ligand>
</feature>
<feature type="binding site" evidence="1">
    <location>
        <position position="415"/>
    </location>
    <ligand>
        <name>ATP</name>
        <dbReference type="ChEBI" id="CHEBI:30616"/>
    </ligand>
</feature>
<feature type="binding site" evidence="1">
    <location>
        <begin position="479"/>
        <end position="481"/>
    </location>
    <ligand>
        <name>ATP</name>
        <dbReference type="ChEBI" id="CHEBI:30616"/>
    </ligand>
</feature>
<feature type="binding site" evidence="1">
    <location>
        <position position="495"/>
    </location>
    <ligand>
        <name>ATP</name>
        <dbReference type="ChEBI" id="CHEBI:30616"/>
    </ligand>
</feature>
<reference key="1">
    <citation type="journal article" date="2012" name="Stand. Genomic Sci.">
        <title>Complete genome sequence of Polynucleobacter necessarius subsp. asymbioticus type strain (QLW-P1DMWA-1(T)).</title>
        <authorList>
            <person name="Meincke L."/>
            <person name="Copeland A."/>
            <person name="Lapidus A."/>
            <person name="Lucas S."/>
            <person name="Berry K.W."/>
            <person name="Del Rio T.G."/>
            <person name="Hammon N."/>
            <person name="Dalin E."/>
            <person name="Tice H."/>
            <person name="Pitluck S."/>
            <person name="Richardson P."/>
            <person name="Bruce D."/>
            <person name="Goodwin L."/>
            <person name="Han C."/>
            <person name="Tapia R."/>
            <person name="Detter J.C."/>
            <person name="Schmutz J."/>
            <person name="Brettin T."/>
            <person name="Larimer F."/>
            <person name="Land M."/>
            <person name="Hauser L."/>
            <person name="Kyrpides N.C."/>
            <person name="Ivanova N."/>
            <person name="Goker M."/>
            <person name="Woyke T."/>
            <person name="Wu Q.L."/>
            <person name="Pockl M."/>
            <person name="Hahn M.W."/>
            <person name="Klenk H.P."/>
        </authorList>
    </citation>
    <scope>NUCLEOTIDE SEQUENCE [LARGE SCALE GENOMIC DNA]</scope>
    <source>
        <strain>DSM 18221 / CIP 109841 / QLW-P1DMWA-1</strain>
    </source>
</reference>
<name>CH60_POLAQ</name>
<protein>
    <recommendedName>
        <fullName evidence="1">Chaperonin GroEL</fullName>
        <ecNumber evidence="1">5.6.1.7</ecNumber>
    </recommendedName>
    <alternativeName>
        <fullName evidence="1">60 kDa chaperonin</fullName>
    </alternativeName>
    <alternativeName>
        <fullName evidence="1">Chaperonin-60</fullName>
        <shortName evidence="1">Cpn60</shortName>
    </alternativeName>
</protein>
<comment type="function">
    <text evidence="1">Together with its co-chaperonin GroES, plays an essential role in assisting protein folding. The GroEL-GroES system forms a nano-cage that allows encapsulation of the non-native substrate proteins and provides a physical environment optimized to promote and accelerate protein folding.</text>
</comment>
<comment type="catalytic activity">
    <reaction evidence="1">
        <text>ATP + H2O + a folded polypeptide = ADP + phosphate + an unfolded polypeptide.</text>
        <dbReference type="EC" id="5.6.1.7"/>
    </reaction>
</comment>
<comment type="subunit">
    <text evidence="1">Forms a cylinder of 14 subunits composed of two heptameric rings stacked back-to-back. Interacts with the co-chaperonin GroES.</text>
</comment>
<comment type="subcellular location">
    <subcellularLocation>
        <location evidence="1">Cytoplasm</location>
    </subcellularLocation>
</comment>
<comment type="similarity">
    <text evidence="1">Belongs to the chaperonin (HSP60) family.</text>
</comment>
<gene>
    <name evidence="1" type="primary">groEL</name>
    <name evidence="1" type="synonym">groL</name>
    <name type="ordered locus">Pnuc_1805</name>
</gene>
<evidence type="ECO:0000255" key="1">
    <source>
        <dbReference type="HAMAP-Rule" id="MF_00600"/>
    </source>
</evidence>
<organism>
    <name type="scientific">Polynucleobacter asymbioticus (strain DSM 18221 / CIP 109841 / QLW-P1DMWA-1)</name>
    <name type="common">Polynucleobacter necessarius subsp. asymbioticus</name>
    <dbReference type="NCBI Taxonomy" id="312153"/>
    <lineage>
        <taxon>Bacteria</taxon>
        <taxon>Pseudomonadati</taxon>
        <taxon>Pseudomonadota</taxon>
        <taxon>Betaproteobacteria</taxon>
        <taxon>Burkholderiales</taxon>
        <taxon>Burkholderiaceae</taxon>
        <taxon>Polynucleobacter</taxon>
    </lineage>
</organism>
<sequence>MAAKDVVFGDSARTKMVEGVNILANAVKTTLGPKGRNVVIERSFGGPTITKDGVSVAKEIELKDKLQNMGAQMVKEVASKTADIAGDGTTTATVLAQSIVREGMKYVVSGHNPMDLKRGIDKAVTAAIAELAKISKPCTTTKEIAQVGSISANSDHSIGQRIAEAMEKVGKEGVITVEDGKSLEDELEVVEGMQFDRGYLSPYFINQPEKQVAVLESPYVLLFDKKIANIRDLLPVLEQVAKSGRPLLIIAEDVEGEALATLVVNNIRGIIKTCAVKAPGFGDRRKAMLEDIAILTGGTVIAEEIGLTLEKATLEHLGQAKRIEVGKENTIIIDGAGDAKAIEARVKNIRVQIEEATSDYDKEKLQERVAKLAGGVAVIRVGAATEVEMKEKKARVDDALHATRAAVEEGIVPGGGVALIRAMQGIKGLKGDNADQDAGISIVLRAMQEPLRTIVSNAGEDAGVVVNAVQASTGNNGYNAATGEYGDLVAQGVIDPTKVTKTALVNAASVAGLLLTTDCAISEAPKDESGAGGMPDMGGMGGMGGMGGMM</sequence>